<protein>
    <recommendedName>
        <fullName>Ependymin-related protein 1</fullName>
    </recommendedName>
</protein>
<organism>
    <name type="scientific">Haliotis asinina</name>
    <name type="common">Donkey's ear abalone</name>
    <name type="synonym">Ass's ear abalone</name>
    <dbReference type="NCBI Taxonomy" id="109174"/>
    <lineage>
        <taxon>Eukaryota</taxon>
        <taxon>Metazoa</taxon>
        <taxon>Spiralia</taxon>
        <taxon>Lophotrochozoa</taxon>
        <taxon>Mollusca</taxon>
        <taxon>Gastropoda</taxon>
        <taxon>Vetigastropoda</taxon>
        <taxon>Lepetellida</taxon>
        <taxon>Haliotoidea</taxon>
        <taxon>Haliotidae</taxon>
        <taxon>Haliotis</taxon>
    </lineage>
</organism>
<accession>P86734</accession>
<keyword id="KW-0903">Direct protein sequencing</keyword>
<keyword id="KW-0325">Glycoprotein</keyword>
<keyword id="KW-0964">Secreted</keyword>
<keyword id="KW-0732">Signal</keyword>
<proteinExistence type="evidence at protein level"/>
<sequence length="200" mass="22066">MILQAALFLAGLTVVSGSICCPPKQFNSYQYVTFVNSTTTIRALYYIVYDGDNQRYLITGDRNNKQLVGTTKVIYDYKKRIAYSIDAKARTCSKFPVQGQFEDQENVCVPGGAEILGPLFYGYNQSRLNSQSYAYNTTSLDGSHHNVVTTVSEDDCVPIVICTITTGGPGGNSLYTVGYNDFYPGIKDITVFDIPPYCNA</sequence>
<gene>
    <name evidence="4" type="primary">Sometsuke</name>
</gene>
<name>EPDR1_HALAI</name>
<feature type="signal peptide" evidence="1">
    <location>
        <begin position="1"/>
        <end position="17"/>
    </location>
</feature>
<feature type="chain" id="PRO_0000399462" description="Ependymin-related protein 1" evidence="1">
    <location>
        <begin position="18"/>
        <end position="200"/>
    </location>
</feature>
<feature type="glycosylation site" description="N-linked (GlcNAc...) asparagine" evidence="1">
    <location>
        <position position="36"/>
    </location>
</feature>
<feature type="glycosylation site" description="N-linked (GlcNAc...) asparagine" evidence="1">
    <location>
        <position position="124"/>
    </location>
</feature>
<feature type="glycosylation site" description="N-linked (GlcNAc...) asparagine" evidence="1">
    <location>
        <position position="136"/>
    </location>
</feature>
<evidence type="ECO:0000255" key="1"/>
<evidence type="ECO:0000269" key="2">
    <source>
    </source>
</evidence>
<evidence type="ECO:0000269" key="3">
    <source>
    </source>
</evidence>
<evidence type="ECO:0000303" key="4">
    <source>
    </source>
</evidence>
<evidence type="ECO:0000305" key="5"/>
<reference evidence="5" key="1">
    <citation type="journal article" date="2006" name="BMC Biol.">
        <title>A rapidly evolving secretome builds and patterns a sea shell.</title>
        <authorList>
            <person name="Jackson D.J."/>
            <person name="McDougall C."/>
            <person name="Green K."/>
            <person name="Simpson F."/>
            <person name="Woerheide G."/>
            <person name="Degnan B.M."/>
        </authorList>
    </citation>
    <scope>NUCLEOTIDE SEQUENCE [MRNA]</scope>
    <scope>TISSUE SPECIFICITY</scope>
    <source>
        <tissue evidence="2">Mantle</tissue>
    </source>
</reference>
<reference evidence="5" key="2">
    <citation type="journal article" date="2010" name="Proteome Sci.">
        <title>Proteomic analysis of the organic matrix of the abalone Haliotis asinina calcified shell.</title>
        <authorList>
            <person name="Marie B."/>
            <person name="Marie A."/>
            <person name="Jackson D.J."/>
            <person name="Dubost L."/>
            <person name="Degnan B.M."/>
            <person name="Milet C."/>
            <person name="Marin F."/>
        </authorList>
    </citation>
    <scope>PROTEIN SEQUENCE OF 43-62; 68-78; 81-88 AND 188-200</scope>
    <scope>SUBCELLULAR LOCATION</scope>
    <scope>TISSUE SPECIFICITY</scope>
    <source>
        <tissue evidence="3">Shell</tissue>
    </source>
</reference>
<dbReference type="EMBL" id="DW986219">
    <property type="status" value="NOT_ANNOTATED_CDS"/>
    <property type="molecule type" value="mRNA"/>
</dbReference>
<dbReference type="SMR" id="P86734"/>
<dbReference type="GlyCosmos" id="P86734">
    <property type="glycosylation" value="3 sites, No reported glycans"/>
</dbReference>
<dbReference type="GO" id="GO:0005576">
    <property type="term" value="C:extracellular region"/>
    <property type="evidence" value="ECO:0000314"/>
    <property type="project" value="UniProtKB"/>
</dbReference>
<dbReference type="GO" id="GO:0005764">
    <property type="term" value="C:lysosome"/>
    <property type="evidence" value="ECO:0007669"/>
    <property type="project" value="TreeGrafter"/>
</dbReference>
<dbReference type="GO" id="GO:0005509">
    <property type="term" value="F:calcium ion binding"/>
    <property type="evidence" value="ECO:0007669"/>
    <property type="project" value="InterPro"/>
</dbReference>
<dbReference type="GO" id="GO:0007160">
    <property type="term" value="P:cell-matrix adhesion"/>
    <property type="evidence" value="ECO:0007669"/>
    <property type="project" value="InterPro"/>
</dbReference>
<dbReference type="InterPro" id="IPR001299">
    <property type="entry name" value="Ependymin"/>
</dbReference>
<dbReference type="PANTHER" id="PTHR10697">
    <property type="entry name" value="MAMMALIAN EPENDYMIN-RELATED PROTEIN 1"/>
    <property type="match status" value="1"/>
</dbReference>
<dbReference type="PANTHER" id="PTHR10697:SF13">
    <property type="entry name" value="RICIN B LECTIN DOMAIN-CONTAINING PROTEIN"/>
    <property type="match status" value="1"/>
</dbReference>
<dbReference type="Pfam" id="PF00811">
    <property type="entry name" value="Ependymin"/>
    <property type="match status" value="1"/>
</dbReference>
<comment type="subcellular location">
    <subcellularLocation>
        <location evidence="3">Secreted</location>
    </subcellularLocation>
</comment>
<comment type="tissue specificity">
    <text evidence="2 3">Component of the acid-soluble and acid-insoluble organic matrix of prismatic shell layers (at protein level). Expressed discontinuously in the anterior zone of the outer fold of the mantle where its expression correlates with shell pigmentation.</text>
</comment>
<comment type="similarity">
    <text evidence="1">Belongs to the ependymin family.</text>
</comment>